<proteinExistence type="inferred from homology"/>
<evidence type="ECO:0000255" key="1">
    <source>
        <dbReference type="HAMAP-Rule" id="MF_00117"/>
    </source>
</evidence>
<organism>
    <name type="scientific">Streptococcus pyogenes serotype M4 (strain MGAS10750)</name>
    <dbReference type="NCBI Taxonomy" id="370554"/>
    <lineage>
        <taxon>Bacteria</taxon>
        <taxon>Bacillati</taxon>
        <taxon>Bacillota</taxon>
        <taxon>Bacilli</taxon>
        <taxon>Lactobacillales</taxon>
        <taxon>Streptococcaceae</taxon>
        <taxon>Streptococcus</taxon>
    </lineage>
</organism>
<gene>
    <name evidence="1" type="primary">hslO</name>
    <name type="ordered locus">MGAS10750_Spy0112</name>
</gene>
<feature type="chain" id="PRO_1000015581" description="33 kDa chaperonin">
    <location>
        <begin position="1"/>
        <end position="290"/>
    </location>
</feature>
<feature type="disulfide bond" description="Redox-active" evidence="1">
    <location>
        <begin position="235"/>
        <end position="237"/>
    </location>
</feature>
<feature type="disulfide bond" description="Redox-active" evidence="1">
    <location>
        <begin position="268"/>
        <end position="271"/>
    </location>
</feature>
<keyword id="KW-0143">Chaperone</keyword>
<keyword id="KW-0963">Cytoplasm</keyword>
<keyword id="KW-1015">Disulfide bond</keyword>
<keyword id="KW-0676">Redox-active center</keyword>
<keyword id="KW-0862">Zinc</keyword>
<sequence length="290" mass="31449">MDKIIKSIAQSGAFRAYVLDSTETVALAQEKHNTLSSSTVALGRTLIANQILAANQKGDSKITVKVIGDSSFGHIISVADTKGHVKGYIQNTGVDIKKTATGEVLVGPFMGNGHFVTIIDYGTGNPYASTTPLITGEIGEDFAYYLTESEQTPSAIGLNVLLDENDKVKVAGGFMVQVLPGASEEEIARYEKRLQEMPAISHLLASKNHVDALLEAIYGDEPYKRLSEEPLSFQCDCSRERFEAALMTLPKADLQAMIDEDKGAEIVCQFCGTKYQFNESDLEALINDKA</sequence>
<accession>Q1J8U9</accession>
<reference key="1">
    <citation type="journal article" date="2006" name="Proc. Natl. Acad. Sci. U.S.A.">
        <title>Molecular genetic anatomy of inter- and intraserotype variation in the human bacterial pathogen group A Streptococcus.</title>
        <authorList>
            <person name="Beres S.B."/>
            <person name="Richter E.W."/>
            <person name="Nagiec M.J."/>
            <person name="Sumby P."/>
            <person name="Porcella S.F."/>
            <person name="DeLeo F.R."/>
            <person name="Musser J.M."/>
        </authorList>
    </citation>
    <scope>NUCLEOTIDE SEQUENCE [LARGE SCALE GENOMIC DNA]</scope>
    <source>
        <strain>MGAS10750</strain>
    </source>
</reference>
<name>HSLO_STRPF</name>
<dbReference type="EMBL" id="CP000262">
    <property type="protein sequence ID" value="ABF37062.1"/>
    <property type="molecule type" value="Genomic_DNA"/>
</dbReference>
<dbReference type="SMR" id="Q1J8U9"/>
<dbReference type="KEGG" id="spi:MGAS10750_Spy0112"/>
<dbReference type="HOGENOM" id="CLU_054493_1_0_9"/>
<dbReference type="Proteomes" id="UP000002434">
    <property type="component" value="Chromosome"/>
</dbReference>
<dbReference type="GO" id="GO:0005737">
    <property type="term" value="C:cytoplasm"/>
    <property type="evidence" value="ECO:0007669"/>
    <property type="project" value="UniProtKB-SubCell"/>
</dbReference>
<dbReference type="GO" id="GO:0044183">
    <property type="term" value="F:protein folding chaperone"/>
    <property type="evidence" value="ECO:0007669"/>
    <property type="project" value="TreeGrafter"/>
</dbReference>
<dbReference type="GO" id="GO:0051082">
    <property type="term" value="F:unfolded protein binding"/>
    <property type="evidence" value="ECO:0007669"/>
    <property type="project" value="UniProtKB-UniRule"/>
</dbReference>
<dbReference type="GO" id="GO:0042026">
    <property type="term" value="P:protein refolding"/>
    <property type="evidence" value="ECO:0007669"/>
    <property type="project" value="TreeGrafter"/>
</dbReference>
<dbReference type="CDD" id="cd00498">
    <property type="entry name" value="Hsp33"/>
    <property type="match status" value="1"/>
</dbReference>
<dbReference type="Gene3D" id="3.55.30.10">
    <property type="entry name" value="Hsp33 domain"/>
    <property type="match status" value="1"/>
</dbReference>
<dbReference type="Gene3D" id="3.90.1280.10">
    <property type="entry name" value="HSP33 redox switch-like"/>
    <property type="match status" value="1"/>
</dbReference>
<dbReference type="HAMAP" id="MF_00117">
    <property type="entry name" value="HslO"/>
    <property type="match status" value="1"/>
</dbReference>
<dbReference type="InterPro" id="IPR000397">
    <property type="entry name" value="Heat_shock_Hsp33"/>
</dbReference>
<dbReference type="InterPro" id="IPR016154">
    <property type="entry name" value="Heat_shock_Hsp33_C"/>
</dbReference>
<dbReference type="InterPro" id="IPR016153">
    <property type="entry name" value="Heat_shock_Hsp33_N"/>
</dbReference>
<dbReference type="NCBIfam" id="NF001033">
    <property type="entry name" value="PRK00114.1"/>
    <property type="match status" value="1"/>
</dbReference>
<dbReference type="PANTHER" id="PTHR30111">
    <property type="entry name" value="33 KDA CHAPERONIN"/>
    <property type="match status" value="1"/>
</dbReference>
<dbReference type="PANTHER" id="PTHR30111:SF1">
    <property type="entry name" value="33 KDA CHAPERONIN"/>
    <property type="match status" value="1"/>
</dbReference>
<dbReference type="Pfam" id="PF01430">
    <property type="entry name" value="HSP33"/>
    <property type="match status" value="1"/>
</dbReference>
<dbReference type="PIRSF" id="PIRSF005261">
    <property type="entry name" value="Heat_shock_Hsp33"/>
    <property type="match status" value="1"/>
</dbReference>
<dbReference type="SUPFAM" id="SSF64397">
    <property type="entry name" value="Hsp33 domain"/>
    <property type="match status" value="1"/>
</dbReference>
<dbReference type="SUPFAM" id="SSF118352">
    <property type="entry name" value="HSP33 redox switch-like"/>
    <property type="match status" value="1"/>
</dbReference>
<comment type="function">
    <text evidence="1">Redox regulated molecular chaperone. Protects both thermally unfolding and oxidatively damaged proteins from irreversible aggregation. Plays an important role in the bacterial defense system toward oxidative stress.</text>
</comment>
<comment type="subcellular location">
    <subcellularLocation>
        <location evidence="1">Cytoplasm</location>
    </subcellularLocation>
</comment>
<comment type="PTM">
    <text evidence="1">Under oxidizing conditions two disulfide bonds are formed involving the reactive cysteines. Under reducing conditions zinc is bound to the reactive cysteines and the protein is inactive.</text>
</comment>
<comment type="similarity">
    <text evidence="1">Belongs to the HSP33 family.</text>
</comment>
<protein>
    <recommendedName>
        <fullName evidence="1">33 kDa chaperonin</fullName>
    </recommendedName>
    <alternativeName>
        <fullName evidence="1">Heat shock protein 33 homolog</fullName>
        <shortName evidence="1">HSP33</shortName>
    </alternativeName>
</protein>